<reference key="1">
    <citation type="journal article" date="2006" name="Nature">
        <title>Human chromosome 11 DNA sequence and analysis including novel gene identification.</title>
        <authorList>
            <person name="Taylor T.D."/>
            <person name="Noguchi H."/>
            <person name="Totoki Y."/>
            <person name="Toyoda A."/>
            <person name="Kuroki Y."/>
            <person name="Dewar K."/>
            <person name="Lloyd C."/>
            <person name="Itoh T."/>
            <person name="Takeda T."/>
            <person name="Kim D.-W."/>
            <person name="She X."/>
            <person name="Barlow K.F."/>
            <person name="Bloom T."/>
            <person name="Bruford E."/>
            <person name="Chang J.L."/>
            <person name="Cuomo C.A."/>
            <person name="Eichler E."/>
            <person name="FitzGerald M.G."/>
            <person name="Jaffe D.B."/>
            <person name="LaButti K."/>
            <person name="Nicol R."/>
            <person name="Park H.-S."/>
            <person name="Seaman C."/>
            <person name="Sougnez C."/>
            <person name="Yang X."/>
            <person name="Zimmer A.R."/>
            <person name="Zody M.C."/>
            <person name="Birren B.W."/>
            <person name="Nusbaum C."/>
            <person name="Fujiyama A."/>
            <person name="Hattori M."/>
            <person name="Rogers J."/>
            <person name="Lander E.S."/>
            <person name="Sakaki Y."/>
        </authorList>
    </citation>
    <scope>NUCLEOTIDE SEQUENCE [LARGE SCALE GENOMIC DNA]</scope>
</reference>
<accession>A0A3B3IT33</accession>
<proteinExistence type="inferred from homology"/>
<organism>
    <name type="scientific">Homo sapiens</name>
    <name type="common">Human</name>
    <dbReference type="NCBI Taxonomy" id="9606"/>
    <lineage>
        <taxon>Eukaryota</taxon>
        <taxon>Metazoa</taxon>
        <taxon>Chordata</taxon>
        <taxon>Craniata</taxon>
        <taxon>Vertebrata</taxon>
        <taxon>Euteleostomi</taxon>
        <taxon>Mammalia</taxon>
        <taxon>Eutheria</taxon>
        <taxon>Euarchontoglires</taxon>
        <taxon>Primates</taxon>
        <taxon>Haplorrhini</taxon>
        <taxon>Catarrhini</taxon>
        <taxon>Hominidae</taxon>
        <taxon>Homo</taxon>
    </lineage>
</organism>
<evidence type="ECO:0000255" key="1">
    <source>
        <dbReference type="PROSITE-ProRule" id="PRU00024"/>
    </source>
</evidence>
<evidence type="ECO:0000255" key="2">
    <source>
        <dbReference type="PROSITE-ProRule" id="PRU00175"/>
    </source>
</evidence>
<evidence type="ECO:0000255" key="3">
    <source>
        <dbReference type="PROSITE-ProRule" id="PRU00548"/>
    </source>
</evidence>
<evidence type="ECO:0000305" key="4"/>
<evidence type="ECO:0000312" key="5">
    <source>
        <dbReference type="HGNC" id="HGNC:43972"/>
    </source>
</evidence>
<keyword id="KW-0479">Metal-binding</keyword>
<keyword id="KW-1185">Reference proteome</keyword>
<keyword id="KW-0862">Zinc</keyword>
<keyword id="KW-0863">Zinc-finger</keyword>
<dbReference type="EMBL" id="AC027369">
    <property type="status" value="NOT_ANNOTATED_CDS"/>
    <property type="molecule type" value="Genomic_DNA"/>
</dbReference>
<dbReference type="CCDS" id="CCDS91472.1"/>
<dbReference type="RefSeq" id="NP_001383004.1">
    <property type="nucleotide sequence ID" value="NM_001396075.1"/>
</dbReference>
<dbReference type="SMR" id="A0A3B3IT33"/>
<dbReference type="FunCoup" id="A0A3B3IT33">
    <property type="interactions" value="185"/>
</dbReference>
<dbReference type="STRING" id="9606.ENSP00000497716"/>
<dbReference type="MassIVE" id="A0A3B3IT33"/>
<dbReference type="PeptideAtlas" id="A0A3B3IT33"/>
<dbReference type="Ensembl" id="ENST00000534741.3">
    <property type="protein sequence ID" value="ENSP00000497050.1"/>
    <property type="gene ID" value="ENSG00000220948.6"/>
</dbReference>
<dbReference type="GeneID" id="120824"/>
<dbReference type="MANE-Select" id="ENST00000534741.3">
    <property type="protein sequence ID" value="ENSP00000497050.1"/>
    <property type="RefSeq nucleotide sequence ID" value="NM_001396075.1"/>
    <property type="RefSeq protein sequence ID" value="NP_001383004.1"/>
</dbReference>
<dbReference type="AGR" id="HGNC:43972"/>
<dbReference type="GeneCards" id="TRIM51G"/>
<dbReference type="HGNC" id="HGNC:43972">
    <property type="gene designation" value="TRIM51G"/>
</dbReference>
<dbReference type="HPA" id="ENSG00000220948">
    <property type="expression patterns" value="Not detected"/>
</dbReference>
<dbReference type="OpenTargets" id="ENSG00000220948"/>
<dbReference type="VEuPathDB" id="HostDB:ENSG00000220948"/>
<dbReference type="GeneTree" id="ENSGT00940000163419"/>
<dbReference type="InParanoid" id="A0A3B3IT33"/>
<dbReference type="OMA" id="PVICCSH"/>
<dbReference type="PAN-GO" id="A0A3B3IT33">
    <property type="GO annotations" value="5 GO annotations based on evolutionary models"/>
</dbReference>
<dbReference type="Proteomes" id="UP000005640">
    <property type="component" value="Chromosome 11"/>
</dbReference>
<dbReference type="GO" id="GO:0005737">
    <property type="term" value="C:cytoplasm"/>
    <property type="evidence" value="ECO:0000318"/>
    <property type="project" value="GO_Central"/>
</dbReference>
<dbReference type="GO" id="GO:0061630">
    <property type="term" value="F:ubiquitin protein ligase activity"/>
    <property type="evidence" value="ECO:0000318"/>
    <property type="project" value="GO_Central"/>
</dbReference>
<dbReference type="GO" id="GO:0008270">
    <property type="term" value="F:zinc ion binding"/>
    <property type="evidence" value="ECO:0007669"/>
    <property type="project" value="UniProtKB-KW"/>
</dbReference>
<dbReference type="GO" id="GO:0045087">
    <property type="term" value="P:innate immune response"/>
    <property type="evidence" value="ECO:0000318"/>
    <property type="project" value="GO_Central"/>
</dbReference>
<dbReference type="GO" id="GO:0010468">
    <property type="term" value="P:regulation of gene expression"/>
    <property type="evidence" value="ECO:0000318"/>
    <property type="project" value="GO_Central"/>
</dbReference>
<dbReference type="CDD" id="cd19783">
    <property type="entry name" value="Bbox2_TRIM43-like"/>
    <property type="match status" value="1"/>
</dbReference>
<dbReference type="CDD" id="cd16603">
    <property type="entry name" value="RING-HC_TRIM43-like_C-IV"/>
    <property type="match status" value="1"/>
</dbReference>
<dbReference type="Gene3D" id="2.60.120.920">
    <property type="match status" value="1"/>
</dbReference>
<dbReference type="Gene3D" id="3.30.160.60">
    <property type="entry name" value="Classic Zinc Finger"/>
    <property type="match status" value="1"/>
</dbReference>
<dbReference type="Gene3D" id="3.30.40.10">
    <property type="entry name" value="Zinc/RING finger domain, C3HC4 (zinc finger)"/>
    <property type="match status" value="1"/>
</dbReference>
<dbReference type="InterPro" id="IPR001870">
    <property type="entry name" value="B30.2/SPRY"/>
</dbReference>
<dbReference type="InterPro" id="IPR043136">
    <property type="entry name" value="B30.2/SPRY_sf"/>
</dbReference>
<dbReference type="InterPro" id="IPR003879">
    <property type="entry name" value="Butyrophylin_SPRY"/>
</dbReference>
<dbReference type="InterPro" id="IPR013320">
    <property type="entry name" value="ConA-like_dom_sf"/>
</dbReference>
<dbReference type="InterPro" id="IPR003877">
    <property type="entry name" value="SPRY_dom"/>
</dbReference>
<dbReference type="InterPro" id="IPR050143">
    <property type="entry name" value="TRIM/RBCC"/>
</dbReference>
<dbReference type="InterPro" id="IPR000315">
    <property type="entry name" value="Znf_B-box"/>
</dbReference>
<dbReference type="InterPro" id="IPR001841">
    <property type="entry name" value="Znf_RING"/>
</dbReference>
<dbReference type="InterPro" id="IPR013083">
    <property type="entry name" value="Znf_RING/FYVE/PHD"/>
</dbReference>
<dbReference type="PANTHER" id="PTHR24103">
    <property type="entry name" value="E3 UBIQUITIN-PROTEIN LIGASE TRIM"/>
    <property type="match status" value="1"/>
</dbReference>
<dbReference type="Pfam" id="PF00622">
    <property type="entry name" value="SPRY"/>
    <property type="match status" value="1"/>
</dbReference>
<dbReference type="Pfam" id="PF00643">
    <property type="entry name" value="zf-B_box"/>
    <property type="match status" value="1"/>
</dbReference>
<dbReference type="Pfam" id="PF15227">
    <property type="entry name" value="zf-C3HC4_4"/>
    <property type="match status" value="1"/>
</dbReference>
<dbReference type="PRINTS" id="PR01407">
    <property type="entry name" value="BUTYPHLNCDUF"/>
</dbReference>
<dbReference type="SMART" id="SM00336">
    <property type="entry name" value="BBOX"/>
    <property type="match status" value="1"/>
</dbReference>
<dbReference type="SMART" id="SM00184">
    <property type="entry name" value="RING"/>
    <property type="match status" value="1"/>
</dbReference>
<dbReference type="SUPFAM" id="SSF57845">
    <property type="entry name" value="B-box zinc-binding domain"/>
    <property type="match status" value="1"/>
</dbReference>
<dbReference type="SUPFAM" id="SSF49899">
    <property type="entry name" value="Concanavalin A-like lectins/glucanases"/>
    <property type="match status" value="1"/>
</dbReference>
<dbReference type="SUPFAM" id="SSF57850">
    <property type="entry name" value="RING/U-box"/>
    <property type="match status" value="1"/>
</dbReference>
<dbReference type="PROSITE" id="PS50188">
    <property type="entry name" value="B302_SPRY"/>
    <property type="match status" value="1"/>
</dbReference>
<dbReference type="PROSITE" id="PS50119">
    <property type="entry name" value="ZF_BBOX"/>
    <property type="match status" value="1"/>
</dbReference>
<dbReference type="PROSITE" id="PS50089">
    <property type="entry name" value="ZF_RING_2"/>
    <property type="match status" value="1"/>
</dbReference>
<comment type="similarity">
    <text evidence="4">Belongs to the TRIM/RBCC family.</text>
</comment>
<sequence>MNSGILQVFQRELICPICMNYFIDPVTIDCGHSFCRPCFYLNWQDMAVLAQCSKCKKTTRQRNLKTNICLKNMASIARKASLRQFLSSEEQICGTHRETKEMFCEVDKSLLCLLCSNSQEHRNHRHCPTEWAAEERREELLRKMQSLWRKMCENHRNLNMATNRIRCWKDYVSLRIEAIRAEYHKMVAFFHEEEQRHLERLQKEGEDIFQQLNESKARMEHSRELLRGMYEDLRQMCHKAVVELFQSFGDILQRYESLLLQVSEPVNPEFSAGPIIGLMDRLKGFRVYLTLQHARASSHIFLHGDLRSMKVGCDPQHDPNITDKSECFLQWGADFFISGKFYWEFNMGHSWNWAFGVCNNYWKEKRQNDMIDGEVGLFLLGCVKEDTHCSLFTTSPLVMQYVPRPTDTVGLFLDCEGRTVSFVDVDRSSLIYTIPNCSFSPPLWPIICCSHF</sequence>
<name>TR51G_HUMAN</name>
<gene>
    <name evidence="5" type="primary">TRIM51G</name>
    <name evidence="5" type="synonym">TRIM51GP</name>
</gene>
<protein>
    <recommendedName>
        <fullName evidence="4">Tripartite motif-containing protein 51G</fullName>
    </recommendedName>
</protein>
<feature type="chain" id="PRO_0000454707" description="Tripartite motif-containing protein 51G">
    <location>
        <begin position="1"/>
        <end position="452"/>
    </location>
</feature>
<feature type="domain" description="B30.2/SPRY" evidence="3">
    <location>
        <begin position="269"/>
        <end position="452"/>
    </location>
</feature>
<feature type="zinc finger region" description="RING-type" evidence="2">
    <location>
        <begin position="15"/>
        <end position="56"/>
    </location>
</feature>
<feature type="zinc finger region" description="B box-type" evidence="1">
    <location>
        <begin position="88"/>
        <end position="129"/>
    </location>
</feature>
<feature type="binding site" evidence="1">
    <location>
        <position position="93"/>
    </location>
    <ligand>
        <name>Zn(2+)</name>
        <dbReference type="ChEBI" id="CHEBI:29105"/>
    </ligand>
</feature>
<feature type="binding site" evidence="1">
    <location>
        <position position="96"/>
    </location>
    <ligand>
        <name>Zn(2+)</name>
        <dbReference type="ChEBI" id="CHEBI:29105"/>
    </ligand>
</feature>
<feature type="binding site" evidence="1">
    <location>
        <position position="115"/>
    </location>
    <ligand>
        <name>Zn(2+)</name>
        <dbReference type="ChEBI" id="CHEBI:29105"/>
    </ligand>
</feature>
<feature type="binding site" evidence="1">
    <location>
        <position position="121"/>
    </location>
    <ligand>
        <name>Zn(2+)</name>
        <dbReference type="ChEBI" id="CHEBI:29105"/>
    </ligand>
</feature>